<name>LEUC_STRMU</name>
<feature type="chain" id="PRO_0000076822" description="3-isopropylmalate dehydratase large subunit">
    <location>
        <begin position="1"/>
        <end position="461"/>
    </location>
</feature>
<feature type="binding site" evidence="1">
    <location>
        <position position="338"/>
    </location>
    <ligand>
        <name>[4Fe-4S] cluster</name>
        <dbReference type="ChEBI" id="CHEBI:49883"/>
    </ligand>
</feature>
<feature type="binding site" evidence="1">
    <location>
        <position position="398"/>
    </location>
    <ligand>
        <name>[4Fe-4S] cluster</name>
        <dbReference type="ChEBI" id="CHEBI:49883"/>
    </ligand>
</feature>
<feature type="binding site" evidence="1">
    <location>
        <position position="401"/>
    </location>
    <ligand>
        <name>[4Fe-4S] cluster</name>
        <dbReference type="ChEBI" id="CHEBI:49883"/>
    </ligand>
</feature>
<accession>Q8DTG4</accession>
<reference key="1">
    <citation type="journal article" date="2002" name="Proc. Natl. Acad. Sci. U.S.A.">
        <title>Genome sequence of Streptococcus mutans UA159, a cariogenic dental pathogen.</title>
        <authorList>
            <person name="Ajdic D.J."/>
            <person name="McShan W.M."/>
            <person name="McLaughlin R.E."/>
            <person name="Savic G."/>
            <person name="Chang J."/>
            <person name="Carson M.B."/>
            <person name="Primeaux C."/>
            <person name="Tian R."/>
            <person name="Kenton S."/>
            <person name="Jia H.G."/>
            <person name="Lin S.P."/>
            <person name="Qian Y."/>
            <person name="Li S."/>
            <person name="Zhu H."/>
            <person name="Najar F.Z."/>
            <person name="Lai H."/>
            <person name="White J."/>
            <person name="Roe B.A."/>
            <person name="Ferretti J.J."/>
        </authorList>
    </citation>
    <scope>NUCLEOTIDE SEQUENCE [LARGE SCALE GENOMIC DNA]</scope>
    <source>
        <strain>ATCC 700610 / UA159</strain>
    </source>
</reference>
<gene>
    <name evidence="1" type="primary">leuC</name>
    <name type="ordered locus">SMU_1382</name>
</gene>
<dbReference type="EC" id="4.2.1.33" evidence="1"/>
<dbReference type="EMBL" id="AE014133">
    <property type="protein sequence ID" value="AAN59049.1"/>
    <property type="molecule type" value="Genomic_DNA"/>
</dbReference>
<dbReference type="RefSeq" id="NP_721743.1">
    <property type="nucleotide sequence ID" value="NC_004350.2"/>
</dbReference>
<dbReference type="RefSeq" id="WP_002262706.1">
    <property type="nucleotide sequence ID" value="NC_004350.2"/>
</dbReference>
<dbReference type="SMR" id="Q8DTG4"/>
<dbReference type="STRING" id="210007.SMU_1382"/>
<dbReference type="DNASU" id="1028647"/>
<dbReference type="GeneID" id="93859170"/>
<dbReference type="KEGG" id="smu:SMU_1382"/>
<dbReference type="PATRIC" id="fig|210007.7.peg.1229"/>
<dbReference type="eggNOG" id="COG0065">
    <property type="taxonomic scope" value="Bacteria"/>
</dbReference>
<dbReference type="HOGENOM" id="CLU_006714_3_4_9"/>
<dbReference type="OrthoDB" id="9802769at2"/>
<dbReference type="PhylomeDB" id="Q8DTG4"/>
<dbReference type="UniPathway" id="UPA00048">
    <property type="reaction ID" value="UER00071"/>
</dbReference>
<dbReference type="Proteomes" id="UP000002512">
    <property type="component" value="Chromosome"/>
</dbReference>
<dbReference type="GO" id="GO:0003861">
    <property type="term" value="F:3-isopropylmalate dehydratase activity"/>
    <property type="evidence" value="ECO:0007669"/>
    <property type="project" value="UniProtKB-UniRule"/>
</dbReference>
<dbReference type="GO" id="GO:0051539">
    <property type="term" value="F:4 iron, 4 sulfur cluster binding"/>
    <property type="evidence" value="ECO:0007669"/>
    <property type="project" value="UniProtKB-KW"/>
</dbReference>
<dbReference type="GO" id="GO:0046872">
    <property type="term" value="F:metal ion binding"/>
    <property type="evidence" value="ECO:0007669"/>
    <property type="project" value="UniProtKB-KW"/>
</dbReference>
<dbReference type="GO" id="GO:0009098">
    <property type="term" value="P:L-leucine biosynthetic process"/>
    <property type="evidence" value="ECO:0007669"/>
    <property type="project" value="UniProtKB-UniRule"/>
</dbReference>
<dbReference type="CDD" id="cd01583">
    <property type="entry name" value="IPMI"/>
    <property type="match status" value="1"/>
</dbReference>
<dbReference type="Gene3D" id="3.30.499.10">
    <property type="entry name" value="Aconitase, domain 3"/>
    <property type="match status" value="2"/>
</dbReference>
<dbReference type="HAMAP" id="MF_01026">
    <property type="entry name" value="LeuC_type1"/>
    <property type="match status" value="1"/>
</dbReference>
<dbReference type="InterPro" id="IPR004430">
    <property type="entry name" value="3-IsopropMal_deHydase_lsu"/>
</dbReference>
<dbReference type="InterPro" id="IPR015931">
    <property type="entry name" value="Acnase/IPM_dHydase_lsu_aba_1/3"/>
</dbReference>
<dbReference type="InterPro" id="IPR001030">
    <property type="entry name" value="Acoase/IPM_deHydtase_lsu_aba"/>
</dbReference>
<dbReference type="InterPro" id="IPR018136">
    <property type="entry name" value="Aconitase_4Fe-4S_BS"/>
</dbReference>
<dbReference type="InterPro" id="IPR036008">
    <property type="entry name" value="Aconitase_4Fe-4S_dom"/>
</dbReference>
<dbReference type="InterPro" id="IPR050067">
    <property type="entry name" value="IPM_dehydratase_rel_enz"/>
</dbReference>
<dbReference type="InterPro" id="IPR033941">
    <property type="entry name" value="IPMI_cat"/>
</dbReference>
<dbReference type="NCBIfam" id="TIGR00170">
    <property type="entry name" value="leuC"/>
    <property type="match status" value="1"/>
</dbReference>
<dbReference type="NCBIfam" id="NF004016">
    <property type="entry name" value="PRK05478.1"/>
    <property type="match status" value="1"/>
</dbReference>
<dbReference type="NCBIfam" id="NF009116">
    <property type="entry name" value="PRK12466.1"/>
    <property type="match status" value="1"/>
</dbReference>
<dbReference type="PANTHER" id="PTHR43822:SF9">
    <property type="entry name" value="3-ISOPROPYLMALATE DEHYDRATASE"/>
    <property type="match status" value="1"/>
</dbReference>
<dbReference type="PANTHER" id="PTHR43822">
    <property type="entry name" value="HOMOACONITASE, MITOCHONDRIAL-RELATED"/>
    <property type="match status" value="1"/>
</dbReference>
<dbReference type="Pfam" id="PF00330">
    <property type="entry name" value="Aconitase"/>
    <property type="match status" value="1"/>
</dbReference>
<dbReference type="PRINTS" id="PR00415">
    <property type="entry name" value="ACONITASE"/>
</dbReference>
<dbReference type="SUPFAM" id="SSF53732">
    <property type="entry name" value="Aconitase iron-sulfur domain"/>
    <property type="match status" value="1"/>
</dbReference>
<dbReference type="PROSITE" id="PS00450">
    <property type="entry name" value="ACONITASE_1"/>
    <property type="match status" value="1"/>
</dbReference>
<dbReference type="PROSITE" id="PS01244">
    <property type="entry name" value="ACONITASE_2"/>
    <property type="match status" value="1"/>
</dbReference>
<comment type="function">
    <text evidence="1">Catalyzes the isomerization between 2-isopropylmalate and 3-isopropylmalate, via the formation of 2-isopropylmaleate.</text>
</comment>
<comment type="catalytic activity">
    <reaction evidence="1">
        <text>(2R,3S)-3-isopropylmalate = (2S)-2-isopropylmalate</text>
        <dbReference type="Rhea" id="RHEA:32287"/>
        <dbReference type="ChEBI" id="CHEBI:1178"/>
        <dbReference type="ChEBI" id="CHEBI:35121"/>
        <dbReference type="EC" id="4.2.1.33"/>
    </reaction>
</comment>
<comment type="cofactor">
    <cofactor evidence="1">
        <name>[4Fe-4S] cluster</name>
        <dbReference type="ChEBI" id="CHEBI:49883"/>
    </cofactor>
    <text evidence="1">Binds 1 [4Fe-4S] cluster per subunit.</text>
</comment>
<comment type="pathway">
    <text evidence="1">Amino-acid biosynthesis; L-leucine biosynthesis; L-leucine from 3-methyl-2-oxobutanoate: step 2/4.</text>
</comment>
<comment type="subunit">
    <text evidence="1">Heterodimer of LeuC and LeuD.</text>
</comment>
<comment type="similarity">
    <text evidence="1">Belongs to the aconitase/IPM isomerase family. LeuC type 1 subfamily.</text>
</comment>
<protein>
    <recommendedName>
        <fullName evidence="1">3-isopropylmalate dehydratase large subunit</fullName>
        <ecNumber evidence="1">4.2.1.33</ecNumber>
    </recommendedName>
    <alternativeName>
        <fullName evidence="1">Alpha-IPM isomerase</fullName>
        <shortName evidence="1">IPMI</shortName>
    </alternativeName>
    <alternativeName>
        <fullName evidence="1">Isopropylmalate isomerase</fullName>
    </alternativeName>
</protein>
<evidence type="ECO:0000255" key="1">
    <source>
        <dbReference type="HAMAP-Rule" id="MF_01026"/>
    </source>
</evidence>
<keyword id="KW-0004">4Fe-4S</keyword>
<keyword id="KW-0028">Amino-acid biosynthesis</keyword>
<keyword id="KW-0100">Branched-chain amino acid biosynthesis</keyword>
<keyword id="KW-0408">Iron</keyword>
<keyword id="KW-0411">Iron-sulfur</keyword>
<keyword id="KW-0432">Leucine biosynthesis</keyword>
<keyword id="KW-0456">Lyase</keyword>
<keyword id="KW-0479">Metal-binding</keyword>
<keyword id="KW-1185">Reference proteome</keyword>
<organism>
    <name type="scientific">Streptococcus mutans serotype c (strain ATCC 700610 / UA159)</name>
    <dbReference type="NCBI Taxonomy" id="210007"/>
    <lineage>
        <taxon>Bacteria</taxon>
        <taxon>Bacillati</taxon>
        <taxon>Bacillota</taxon>
        <taxon>Bacilli</taxon>
        <taxon>Lactobacillales</taxon>
        <taxon>Streptococcaceae</taxon>
        <taxon>Streptococcus</taxon>
    </lineage>
</organism>
<proteinExistence type="inferred from homology"/>
<sequence>MSGKSIFDKLWDRHVITGKEGEPQLMYVDQHYIHEVTSPQAFQGLRDAGRKVRRPDLTFGTFDHNVPTVNIYDIRDVISKAQMDALARNVIEFNIPHADHGSENQGIVHMVGPETGRTQPGKFIVCGDSHTATHGAFGAIGFGIGTTEVEHVFATQTIWQVKPKKLLVKFTGKPQKGVYSKDYILALIAKYGVALGVGYVVEYIGDAVDALSMEERMTICNMSIEFGSKMGIMNPDQKTFDYLKNKACVPEDFETAVADWKTLVSDEDAHYDKVIELDVSQLAPMVTWGTNPSMGVAFGQAFPDIRDMNDKRAYDYMDMKPGQTAEDIELGYVFLGSCTNARLSDLKVAAKYVAGKHIAPNLTAIVVPGSRPVKQAAEKIGLDKIFLDAGFEWRDPGCSMCLGMNPDKVPEGMHCASTSNRNFEDRQGVGAKTHLCSPAMAAAAAIAGRFIDVRQLPEAQV</sequence>